<protein>
    <recommendedName>
        <fullName>Required for respiratory growth protein 1, mitochondrial</fullName>
    </recommendedName>
</protein>
<proteinExistence type="inferred from homology"/>
<feature type="chain" id="PRO_0000402254" description="Required for respiratory growth protein 1, mitochondrial">
    <location>
        <begin position="1"/>
        <end position="371"/>
    </location>
</feature>
<reference key="1">
    <citation type="journal article" date="2009" name="Genome Res.">
        <title>Comparative genomics of protoploid Saccharomycetaceae.</title>
        <authorList>
            <consortium name="The Genolevures Consortium"/>
            <person name="Souciet J.-L."/>
            <person name="Dujon B."/>
            <person name="Gaillardin C."/>
            <person name="Johnston M."/>
            <person name="Baret P.V."/>
            <person name="Cliften P."/>
            <person name="Sherman D.J."/>
            <person name="Weissenbach J."/>
            <person name="Westhof E."/>
            <person name="Wincker P."/>
            <person name="Jubin C."/>
            <person name="Poulain J."/>
            <person name="Barbe V."/>
            <person name="Segurens B."/>
            <person name="Artiguenave F."/>
            <person name="Anthouard V."/>
            <person name="Vacherie B."/>
            <person name="Val M.-E."/>
            <person name="Fulton R.S."/>
            <person name="Minx P."/>
            <person name="Wilson R."/>
            <person name="Durrens P."/>
            <person name="Jean G."/>
            <person name="Marck C."/>
            <person name="Martin T."/>
            <person name="Nikolski M."/>
            <person name="Rolland T."/>
            <person name="Seret M.-L."/>
            <person name="Casaregola S."/>
            <person name="Despons L."/>
            <person name="Fairhead C."/>
            <person name="Fischer G."/>
            <person name="Lafontaine I."/>
            <person name="Leh V."/>
            <person name="Lemaire M."/>
            <person name="de Montigny J."/>
            <person name="Neuveglise C."/>
            <person name="Thierry A."/>
            <person name="Blanc-Lenfle I."/>
            <person name="Bleykasten C."/>
            <person name="Diffels J."/>
            <person name="Fritsch E."/>
            <person name="Frangeul L."/>
            <person name="Goeffon A."/>
            <person name="Jauniaux N."/>
            <person name="Kachouri-Lafond R."/>
            <person name="Payen C."/>
            <person name="Potier S."/>
            <person name="Pribylova L."/>
            <person name="Ozanne C."/>
            <person name="Richard G.-F."/>
            <person name="Sacerdot C."/>
            <person name="Straub M.-L."/>
            <person name="Talla E."/>
        </authorList>
    </citation>
    <scope>NUCLEOTIDE SEQUENCE [LARGE SCALE GENOMIC DNA]</scope>
    <source>
        <strain>ATCC 2623 / CBS 732 / BCRC 21506 / NBRC 1130 / NCYC 568 / NRRL Y-229</strain>
    </source>
</reference>
<keyword id="KW-0496">Mitochondrion</keyword>
<keyword id="KW-1185">Reference proteome</keyword>
<accession>C5DZT2</accession>
<comment type="function">
    <text evidence="1">Essential for respiratory growth and required for mitochondrial protein synthesis. Required for vacuolar acidification (By similarity).</text>
</comment>
<comment type="subcellular location">
    <subcellularLocation>
        <location evidence="1">Mitochondrion</location>
    </subcellularLocation>
</comment>
<comment type="similarity">
    <text evidence="2">Belongs to the RRG1 family.</text>
</comment>
<sequence>MVQNFIHLPEHRQCVLHLYRHTLRNSKQCCHSQHLINRIKKITRQTIVKHRYDKSSWSVHFYLQKLYELNHLLIQRDVKTVWNLLTDVSKSKSKSKSKKSSTRSSRILKALQDIHQLKQDKGLQDPQIVREKLILNNYIKREQARNHLPRFIPEEYKTKLLLPLALHTVAMARLNSIHGKLVEGPPKVFLTHTTPMGHRIWFVRSAFNKKKRQSKTLGILIRREKNEGHKRWDYLRQCKSNAYWAQQEANWEQLIENKIVPQFDLNRYLDSQSIGKKKIECPPQLAHWLEPIGYSIQKLNQINADKAAYFRNYKNRVLLNGGQALYFENKSITMYQRRVKRFQQMVQNDLPYVVPFFPGRDLLSTLTKYRF</sequence>
<gene>
    <name type="primary">RRG1</name>
    <name type="ordered locus">ZYRO0G06974g</name>
</gene>
<name>RRG1_ZYGRC</name>
<evidence type="ECO:0000250" key="1"/>
<evidence type="ECO:0000305" key="2"/>
<dbReference type="EMBL" id="CU928179">
    <property type="protein sequence ID" value="CAR29366.1"/>
    <property type="molecule type" value="Genomic_DNA"/>
</dbReference>
<dbReference type="RefSeq" id="XP_002498299.1">
    <property type="nucleotide sequence ID" value="XM_002498254.1"/>
</dbReference>
<dbReference type="FunCoup" id="C5DZT2">
    <property type="interactions" value="35"/>
</dbReference>
<dbReference type="GeneID" id="8206099"/>
<dbReference type="KEGG" id="zro:ZYRO0G06974g"/>
<dbReference type="HOGENOM" id="CLU_062256_0_0_1"/>
<dbReference type="InParanoid" id="C5DZT2"/>
<dbReference type="Proteomes" id="UP000008536">
    <property type="component" value="Chromosome G"/>
</dbReference>
<dbReference type="GO" id="GO:0005739">
    <property type="term" value="C:mitochondrion"/>
    <property type="evidence" value="ECO:0007669"/>
    <property type="project" value="UniProtKB-SubCell"/>
</dbReference>
<organism>
    <name type="scientific">Zygosaccharomyces rouxii (strain ATCC 2623 / CBS 732 / NBRC 1130 / NCYC 568 / NRRL Y-229)</name>
    <dbReference type="NCBI Taxonomy" id="559307"/>
    <lineage>
        <taxon>Eukaryota</taxon>
        <taxon>Fungi</taxon>
        <taxon>Dikarya</taxon>
        <taxon>Ascomycota</taxon>
        <taxon>Saccharomycotina</taxon>
        <taxon>Saccharomycetes</taxon>
        <taxon>Saccharomycetales</taxon>
        <taxon>Saccharomycetaceae</taxon>
        <taxon>Zygosaccharomyces</taxon>
    </lineage>
</organism>